<dbReference type="EMBL" id="CU468230">
    <property type="protein sequence ID" value="CAP02458.1"/>
    <property type="molecule type" value="Genomic_DNA"/>
</dbReference>
<dbReference type="SMR" id="B0VLU2"/>
<dbReference type="KEGG" id="abm:ABSDF3180"/>
<dbReference type="HOGENOM" id="CLU_006301_6_2_6"/>
<dbReference type="Proteomes" id="UP000001741">
    <property type="component" value="Chromosome"/>
</dbReference>
<dbReference type="GO" id="GO:0005829">
    <property type="term" value="C:cytosol"/>
    <property type="evidence" value="ECO:0007669"/>
    <property type="project" value="TreeGrafter"/>
</dbReference>
<dbReference type="GO" id="GO:0005525">
    <property type="term" value="F:GTP binding"/>
    <property type="evidence" value="ECO:0007669"/>
    <property type="project" value="UniProtKB-KW"/>
</dbReference>
<dbReference type="GO" id="GO:0003924">
    <property type="term" value="F:GTPase activity"/>
    <property type="evidence" value="ECO:0007669"/>
    <property type="project" value="UniProtKB-UniRule"/>
</dbReference>
<dbReference type="GO" id="GO:0003743">
    <property type="term" value="F:translation initiation factor activity"/>
    <property type="evidence" value="ECO:0007669"/>
    <property type="project" value="UniProtKB-UniRule"/>
</dbReference>
<dbReference type="CDD" id="cd01887">
    <property type="entry name" value="IF2_eIF5B"/>
    <property type="match status" value="1"/>
</dbReference>
<dbReference type="CDD" id="cd03702">
    <property type="entry name" value="IF2_mtIF2_II"/>
    <property type="match status" value="1"/>
</dbReference>
<dbReference type="CDD" id="cd03692">
    <property type="entry name" value="mtIF2_IVc"/>
    <property type="match status" value="1"/>
</dbReference>
<dbReference type="FunFam" id="2.40.30.10:FF:000007">
    <property type="entry name" value="Translation initiation factor IF-2"/>
    <property type="match status" value="1"/>
</dbReference>
<dbReference type="FunFam" id="2.40.30.10:FF:000008">
    <property type="entry name" value="Translation initiation factor IF-2"/>
    <property type="match status" value="1"/>
</dbReference>
<dbReference type="FunFam" id="3.40.50.10050:FF:000001">
    <property type="entry name" value="Translation initiation factor IF-2"/>
    <property type="match status" value="1"/>
</dbReference>
<dbReference type="FunFam" id="3.40.50.300:FF:000019">
    <property type="entry name" value="Translation initiation factor IF-2"/>
    <property type="match status" value="1"/>
</dbReference>
<dbReference type="Gene3D" id="3.40.50.300">
    <property type="entry name" value="P-loop containing nucleotide triphosphate hydrolases"/>
    <property type="match status" value="1"/>
</dbReference>
<dbReference type="Gene3D" id="3.30.56.50">
    <property type="entry name" value="Putative DNA-binding domain, N-terminal subdomain of bacterial translation initiation factor IF2"/>
    <property type="match status" value="1"/>
</dbReference>
<dbReference type="Gene3D" id="2.40.30.10">
    <property type="entry name" value="Translation factors"/>
    <property type="match status" value="2"/>
</dbReference>
<dbReference type="Gene3D" id="3.40.50.10050">
    <property type="entry name" value="Translation initiation factor IF- 2, domain 3"/>
    <property type="match status" value="1"/>
</dbReference>
<dbReference type="HAMAP" id="MF_00100_B">
    <property type="entry name" value="IF_2_B"/>
    <property type="match status" value="1"/>
</dbReference>
<dbReference type="InterPro" id="IPR009061">
    <property type="entry name" value="DNA-bd_dom_put_sf"/>
</dbReference>
<dbReference type="InterPro" id="IPR053905">
    <property type="entry name" value="EF-G-like_DII"/>
</dbReference>
<dbReference type="InterPro" id="IPR013575">
    <property type="entry name" value="IF2_assoc_dom_bac"/>
</dbReference>
<dbReference type="InterPro" id="IPR044145">
    <property type="entry name" value="IF2_II"/>
</dbReference>
<dbReference type="InterPro" id="IPR006847">
    <property type="entry name" value="IF2_N"/>
</dbReference>
<dbReference type="InterPro" id="IPR027417">
    <property type="entry name" value="P-loop_NTPase"/>
</dbReference>
<dbReference type="InterPro" id="IPR005225">
    <property type="entry name" value="Small_GTP-bd"/>
</dbReference>
<dbReference type="InterPro" id="IPR000795">
    <property type="entry name" value="T_Tr_GTP-bd_dom"/>
</dbReference>
<dbReference type="InterPro" id="IPR000178">
    <property type="entry name" value="TF_IF2_bacterial-like"/>
</dbReference>
<dbReference type="InterPro" id="IPR015760">
    <property type="entry name" value="TIF_IF2"/>
</dbReference>
<dbReference type="InterPro" id="IPR023115">
    <property type="entry name" value="TIF_IF2_dom3"/>
</dbReference>
<dbReference type="InterPro" id="IPR036925">
    <property type="entry name" value="TIF_IF2_dom3_sf"/>
</dbReference>
<dbReference type="InterPro" id="IPR009000">
    <property type="entry name" value="Transl_B-barrel_sf"/>
</dbReference>
<dbReference type="NCBIfam" id="TIGR00487">
    <property type="entry name" value="IF-2"/>
    <property type="match status" value="1"/>
</dbReference>
<dbReference type="NCBIfam" id="TIGR00231">
    <property type="entry name" value="small_GTP"/>
    <property type="match status" value="1"/>
</dbReference>
<dbReference type="PANTHER" id="PTHR43381:SF5">
    <property type="entry name" value="TR-TYPE G DOMAIN-CONTAINING PROTEIN"/>
    <property type="match status" value="1"/>
</dbReference>
<dbReference type="PANTHER" id="PTHR43381">
    <property type="entry name" value="TRANSLATION INITIATION FACTOR IF-2-RELATED"/>
    <property type="match status" value="1"/>
</dbReference>
<dbReference type="Pfam" id="PF22042">
    <property type="entry name" value="EF-G_D2"/>
    <property type="match status" value="1"/>
</dbReference>
<dbReference type="Pfam" id="PF00009">
    <property type="entry name" value="GTP_EFTU"/>
    <property type="match status" value="1"/>
</dbReference>
<dbReference type="Pfam" id="PF11987">
    <property type="entry name" value="IF-2"/>
    <property type="match status" value="1"/>
</dbReference>
<dbReference type="Pfam" id="PF08364">
    <property type="entry name" value="IF2_assoc"/>
    <property type="match status" value="1"/>
</dbReference>
<dbReference type="Pfam" id="PF04760">
    <property type="entry name" value="IF2_N"/>
    <property type="match status" value="1"/>
</dbReference>
<dbReference type="SUPFAM" id="SSF52156">
    <property type="entry name" value="Initiation factor IF2/eIF5b, domain 3"/>
    <property type="match status" value="1"/>
</dbReference>
<dbReference type="SUPFAM" id="SSF52540">
    <property type="entry name" value="P-loop containing nucleoside triphosphate hydrolases"/>
    <property type="match status" value="1"/>
</dbReference>
<dbReference type="SUPFAM" id="SSF46955">
    <property type="entry name" value="Putative DNA-binding domain"/>
    <property type="match status" value="1"/>
</dbReference>
<dbReference type="SUPFAM" id="SSF50447">
    <property type="entry name" value="Translation proteins"/>
    <property type="match status" value="2"/>
</dbReference>
<dbReference type="PROSITE" id="PS51722">
    <property type="entry name" value="G_TR_2"/>
    <property type="match status" value="1"/>
</dbReference>
<dbReference type="PROSITE" id="PS01176">
    <property type="entry name" value="IF2"/>
    <property type="match status" value="1"/>
</dbReference>
<keyword id="KW-0963">Cytoplasm</keyword>
<keyword id="KW-0342">GTP-binding</keyword>
<keyword id="KW-0396">Initiation factor</keyword>
<keyword id="KW-0547">Nucleotide-binding</keyword>
<keyword id="KW-0648">Protein biosynthesis</keyword>
<name>IF2_ACIBS</name>
<gene>
    <name evidence="2" type="primary">infB</name>
    <name type="ordered locus">ABSDF3180</name>
</gene>
<proteinExistence type="inferred from homology"/>
<protein>
    <recommendedName>
        <fullName evidence="2">Translation initiation factor IF-2</fullName>
    </recommendedName>
</protein>
<accession>B0VLU2</accession>
<feature type="chain" id="PRO_1000093750" description="Translation initiation factor IF-2">
    <location>
        <begin position="1"/>
        <end position="899"/>
    </location>
</feature>
<feature type="domain" description="tr-type G">
    <location>
        <begin position="399"/>
        <end position="568"/>
    </location>
</feature>
<feature type="region of interest" description="Disordered" evidence="3">
    <location>
        <begin position="115"/>
        <end position="137"/>
    </location>
</feature>
<feature type="region of interest" description="Disordered" evidence="3">
    <location>
        <begin position="170"/>
        <end position="189"/>
    </location>
</feature>
<feature type="region of interest" description="Disordered" evidence="3">
    <location>
        <begin position="262"/>
        <end position="309"/>
    </location>
</feature>
<feature type="region of interest" description="G1" evidence="1">
    <location>
        <begin position="408"/>
        <end position="415"/>
    </location>
</feature>
<feature type="region of interest" description="G2" evidence="1">
    <location>
        <begin position="433"/>
        <end position="437"/>
    </location>
</feature>
<feature type="region of interest" description="G3" evidence="1">
    <location>
        <begin position="454"/>
        <end position="457"/>
    </location>
</feature>
<feature type="region of interest" description="G4" evidence="1">
    <location>
        <begin position="508"/>
        <end position="511"/>
    </location>
</feature>
<feature type="region of interest" description="G5" evidence="1">
    <location>
        <begin position="544"/>
        <end position="546"/>
    </location>
</feature>
<feature type="binding site" evidence="2">
    <location>
        <begin position="408"/>
        <end position="415"/>
    </location>
    <ligand>
        <name>GTP</name>
        <dbReference type="ChEBI" id="CHEBI:37565"/>
    </ligand>
</feature>
<feature type="binding site" evidence="2">
    <location>
        <begin position="454"/>
        <end position="458"/>
    </location>
    <ligand>
        <name>GTP</name>
        <dbReference type="ChEBI" id="CHEBI:37565"/>
    </ligand>
</feature>
<feature type="binding site" evidence="2">
    <location>
        <begin position="508"/>
        <end position="511"/>
    </location>
    <ligand>
        <name>GTP</name>
        <dbReference type="ChEBI" id="CHEBI:37565"/>
    </ligand>
</feature>
<sequence>MTDKSIKELALSVGRPVEKLLEQAREAGLPQRTADDIITTEQQDTLVNYLKKVHGQESGNTGKIALKRKTTSTAKVASTSGKAKTINVEVRKKQVFAKPNPEQIAAEAKARAEAEAKARAEQQAREAAEQKARLQTEQKAKATLDAMRAAHQQDSAAQSAPKAAVVVEKRGGGTVKPAPKPAETLEQKKAREAQTAQLKATEEAARRKAAEEAQQRTLEQMRKMASKYSNDDATATIRVIDDSPLASGLVGQAYEDSFNQEDREIKRGGATTNPRAGKKGGRRGQEEQSFVNHNKRGLKSSQANKHGFEKPVKKQVYDVEIGSSIVVADLAQKMAIKVREVIKTLMKMGELVNQNQTIDQDTAALVVEEMGHNPVLVSDTQAEDNLLEAAEEARGEQTTRPPVVTIMGHVDHGKTSLLDRIRRSKVAAGEAGGITQHIGAYHVETDKGIITFLDTPGHAAFTSMRARGAKATDIVVLVVAADDGVMPQTAEAIDHARAAGTPIIVAINKMDKESADPDRVLNELTTKEIVPEEWGGDVPVAKVSAHTGQGIDELLDLILIQSELMELKASAEGAAQGVVIEARVDKGRGAVTSILVQNGTLNIGDLVLAGSSYGRVRAMSDENGKPIKSAGPSIPVEILGLPEAPMAGDEVLVVNDEKKAREVADARADREREKRIERQSAMRLENIMASMGKKDVPTVNVVLRTDVRGTLEALNAALHELSTDEVKVRVISSGVGAITESDVILAESSEAVLLGFNVRADTAARQKSDQDGIDIRYYSIIYELIDDVKDAMSGKLAPEHRETILGVAQVREVFRSSKFGAAAGCMVMEGVIHRNKPIRVLRDDVVIFQGELESLRRYKDVVDEVRAGMECGLAVKGYNDIKPLDKIEVYDVQIVKRSL</sequence>
<comment type="function">
    <text evidence="2">One of the essential components for the initiation of protein synthesis. Protects formylmethionyl-tRNA from spontaneous hydrolysis and promotes its binding to the 30S ribosomal subunits. Also involved in the hydrolysis of GTP during the formation of the 70S ribosomal complex.</text>
</comment>
<comment type="subcellular location">
    <subcellularLocation>
        <location evidence="2">Cytoplasm</location>
    </subcellularLocation>
</comment>
<comment type="similarity">
    <text evidence="2">Belongs to the TRAFAC class translation factor GTPase superfamily. Classic translation factor GTPase family. IF-2 subfamily.</text>
</comment>
<evidence type="ECO:0000250" key="1"/>
<evidence type="ECO:0000255" key="2">
    <source>
        <dbReference type="HAMAP-Rule" id="MF_00100"/>
    </source>
</evidence>
<evidence type="ECO:0000256" key="3">
    <source>
        <dbReference type="SAM" id="MobiDB-lite"/>
    </source>
</evidence>
<organism>
    <name type="scientific">Acinetobacter baumannii (strain SDF)</name>
    <dbReference type="NCBI Taxonomy" id="509170"/>
    <lineage>
        <taxon>Bacteria</taxon>
        <taxon>Pseudomonadati</taxon>
        <taxon>Pseudomonadota</taxon>
        <taxon>Gammaproteobacteria</taxon>
        <taxon>Moraxellales</taxon>
        <taxon>Moraxellaceae</taxon>
        <taxon>Acinetobacter</taxon>
        <taxon>Acinetobacter calcoaceticus/baumannii complex</taxon>
    </lineage>
</organism>
<reference key="1">
    <citation type="journal article" date="2008" name="PLoS ONE">
        <title>Comparative analysis of Acinetobacters: three genomes for three lifestyles.</title>
        <authorList>
            <person name="Vallenet D."/>
            <person name="Nordmann P."/>
            <person name="Barbe V."/>
            <person name="Poirel L."/>
            <person name="Mangenot S."/>
            <person name="Bataille E."/>
            <person name="Dossat C."/>
            <person name="Gas S."/>
            <person name="Kreimeyer A."/>
            <person name="Lenoble P."/>
            <person name="Oztas S."/>
            <person name="Poulain J."/>
            <person name="Segurens B."/>
            <person name="Robert C."/>
            <person name="Abergel C."/>
            <person name="Claverie J.-M."/>
            <person name="Raoult D."/>
            <person name="Medigue C."/>
            <person name="Weissenbach J."/>
            <person name="Cruveiller S."/>
        </authorList>
    </citation>
    <scope>NUCLEOTIDE SEQUENCE [LARGE SCALE GENOMIC DNA]</scope>
    <source>
        <strain>SDF</strain>
    </source>
</reference>